<comment type="function">
    <text evidence="1">Removes the pyruvyl group from chorismate, with concomitant aromatization of the ring, to provide 4-hydroxybenzoate (4HB) for the ubiquinone pathway.</text>
</comment>
<comment type="catalytic activity">
    <reaction evidence="1">
        <text>chorismate = 4-hydroxybenzoate + pyruvate</text>
        <dbReference type="Rhea" id="RHEA:16505"/>
        <dbReference type="ChEBI" id="CHEBI:15361"/>
        <dbReference type="ChEBI" id="CHEBI:17879"/>
        <dbReference type="ChEBI" id="CHEBI:29748"/>
        <dbReference type="EC" id="4.1.3.40"/>
    </reaction>
</comment>
<comment type="pathway">
    <text evidence="1">Cofactor biosynthesis; ubiquinone biosynthesis.</text>
</comment>
<comment type="subunit">
    <text evidence="1">Monomer.</text>
</comment>
<comment type="subcellular location">
    <subcellularLocation>
        <location evidence="1">Cytoplasm</location>
    </subcellularLocation>
</comment>
<comment type="similarity">
    <text evidence="1">Belongs to the UbiC family.</text>
</comment>
<evidence type="ECO:0000255" key="1">
    <source>
        <dbReference type="HAMAP-Rule" id="MF_01632"/>
    </source>
</evidence>
<dbReference type="EC" id="4.1.3.40" evidence="1"/>
<dbReference type="EMBL" id="CP001144">
    <property type="protein sequence ID" value="ACH74316.1"/>
    <property type="molecule type" value="Genomic_DNA"/>
</dbReference>
<dbReference type="RefSeq" id="WP_000019230.1">
    <property type="nucleotide sequence ID" value="NC_011205.1"/>
</dbReference>
<dbReference type="SMR" id="B5FQQ7"/>
<dbReference type="KEGG" id="sed:SeD_A4627"/>
<dbReference type="HOGENOM" id="CLU_096824_1_0_6"/>
<dbReference type="UniPathway" id="UPA00232"/>
<dbReference type="Proteomes" id="UP000008322">
    <property type="component" value="Chromosome"/>
</dbReference>
<dbReference type="GO" id="GO:0005829">
    <property type="term" value="C:cytosol"/>
    <property type="evidence" value="ECO:0007669"/>
    <property type="project" value="TreeGrafter"/>
</dbReference>
<dbReference type="GO" id="GO:0008813">
    <property type="term" value="F:chorismate lyase activity"/>
    <property type="evidence" value="ECO:0007669"/>
    <property type="project" value="UniProtKB-UniRule"/>
</dbReference>
<dbReference type="GO" id="GO:0042866">
    <property type="term" value="P:pyruvate biosynthetic process"/>
    <property type="evidence" value="ECO:0007669"/>
    <property type="project" value="UniProtKB-UniRule"/>
</dbReference>
<dbReference type="GO" id="GO:0006744">
    <property type="term" value="P:ubiquinone biosynthetic process"/>
    <property type="evidence" value="ECO:0007669"/>
    <property type="project" value="UniProtKB-UniRule"/>
</dbReference>
<dbReference type="FunFam" id="3.40.1410.10:FF:000002">
    <property type="entry name" value="Chorismate pyruvate-lyase"/>
    <property type="match status" value="1"/>
</dbReference>
<dbReference type="Gene3D" id="3.40.1410.10">
    <property type="entry name" value="Chorismate lyase-like"/>
    <property type="match status" value="1"/>
</dbReference>
<dbReference type="HAMAP" id="MF_01632">
    <property type="entry name" value="UbiC"/>
    <property type="match status" value="1"/>
</dbReference>
<dbReference type="InterPro" id="IPR007440">
    <property type="entry name" value="Chorismate--pyruvate_lyase"/>
</dbReference>
<dbReference type="InterPro" id="IPR028978">
    <property type="entry name" value="Chorismate_lyase_/UTRA_dom_sf"/>
</dbReference>
<dbReference type="NCBIfam" id="NF008656">
    <property type="entry name" value="PRK11655.1"/>
    <property type="match status" value="1"/>
</dbReference>
<dbReference type="PANTHER" id="PTHR38683">
    <property type="entry name" value="CHORISMATE PYRUVATE-LYASE"/>
    <property type="match status" value="1"/>
</dbReference>
<dbReference type="PANTHER" id="PTHR38683:SF1">
    <property type="entry name" value="CHORISMATE PYRUVATE-LYASE"/>
    <property type="match status" value="1"/>
</dbReference>
<dbReference type="Pfam" id="PF04345">
    <property type="entry name" value="Chor_lyase"/>
    <property type="match status" value="1"/>
</dbReference>
<dbReference type="SUPFAM" id="SSF64288">
    <property type="entry name" value="Chorismate lyase-like"/>
    <property type="match status" value="1"/>
</dbReference>
<name>UBIC_SALDC</name>
<accession>B5FQQ7</accession>
<proteinExistence type="inferred from homology"/>
<reference key="1">
    <citation type="journal article" date="2011" name="J. Bacteriol.">
        <title>Comparative genomics of 28 Salmonella enterica isolates: evidence for CRISPR-mediated adaptive sublineage evolution.</title>
        <authorList>
            <person name="Fricke W.F."/>
            <person name="Mammel M.K."/>
            <person name="McDermott P.F."/>
            <person name="Tartera C."/>
            <person name="White D.G."/>
            <person name="Leclerc J.E."/>
            <person name="Ravel J."/>
            <person name="Cebula T.A."/>
        </authorList>
    </citation>
    <scope>NUCLEOTIDE SEQUENCE [LARGE SCALE GENOMIC DNA]</scope>
    <source>
        <strain>CT_02021853</strain>
    </source>
</reference>
<gene>
    <name evidence="1" type="primary">ubiC</name>
    <name type="ordered locus">SeD_A4627</name>
</gene>
<sequence length="165" mass="18748">MSHPALTRLRALRYFDAIPALEPHLLDWLLLEDSMTKRFEQQGKRVSVTLIREAFVGQSEVEEASGLLPSESRYWLREILLCADGEPWLAGRTVVPESTLCGPEQVLQHLGKTPLGRYLFTSSTLTRDFIEIGRDATLWGRRSRLRLSGKPLLLTELFLPASPLY</sequence>
<organism>
    <name type="scientific">Salmonella dublin (strain CT_02021853)</name>
    <dbReference type="NCBI Taxonomy" id="439851"/>
    <lineage>
        <taxon>Bacteria</taxon>
        <taxon>Pseudomonadati</taxon>
        <taxon>Pseudomonadota</taxon>
        <taxon>Gammaproteobacteria</taxon>
        <taxon>Enterobacterales</taxon>
        <taxon>Enterobacteriaceae</taxon>
        <taxon>Salmonella</taxon>
    </lineage>
</organism>
<protein>
    <recommendedName>
        <fullName evidence="1">Chorismate pyruvate-lyase</fullName>
        <shortName evidence="1">CL</shortName>
        <shortName evidence="1">CPL</shortName>
        <ecNumber evidence="1">4.1.3.40</ecNumber>
    </recommendedName>
</protein>
<feature type="chain" id="PRO_1000186532" description="Chorismate pyruvate-lyase">
    <location>
        <begin position="1"/>
        <end position="165"/>
    </location>
</feature>
<feature type="binding site" evidence="1">
    <location>
        <position position="35"/>
    </location>
    <ligand>
        <name>substrate</name>
    </ligand>
</feature>
<feature type="binding site" evidence="1">
    <location>
        <position position="77"/>
    </location>
    <ligand>
        <name>substrate</name>
    </ligand>
</feature>
<feature type="binding site" evidence="1">
    <location>
        <position position="115"/>
    </location>
    <ligand>
        <name>substrate</name>
    </ligand>
</feature>
<feature type="binding site" evidence="1">
    <location>
        <position position="156"/>
    </location>
    <ligand>
        <name>substrate</name>
    </ligand>
</feature>
<keyword id="KW-0963">Cytoplasm</keyword>
<keyword id="KW-0456">Lyase</keyword>
<keyword id="KW-0670">Pyruvate</keyword>
<keyword id="KW-0831">Ubiquinone biosynthesis</keyword>